<protein>
    <recommendedName>
        <fullName>Oxygen regulatory protein NreC</fullName>
    </recommendedName>
    <alternativeName>
        <fullName>Nitrogen regulation protein C</fullName>
    </alternativeName>
</protein>
<sequence length="217" mass="24467">MKIVIADDHAVVRTGFSMILNFQDDMEVVDTAADGVEAYQKVMQHQPDVLIMDLSMPPGESGLIATSKIVESFPDTKILILTMYDDEEYLFHVLRNGAKGYILKNAPDEQLISAVRTVYRGDTYIDPKMTTSLVNEFVNNTGQDANSTNDPFRILSKRELEILPLIAKGYGNKEIAEKLFVSVKTVEAHKTHIMQKLNLKSKPELVEYALKKKLLDF</sequence>
<keyword id="KW-0010">Activator</keyword>
<keyword id="KW-0963">Cytoplasm</keyword>
<keyword id="KW-0238">DNA-binding</keyword>
<keyword id="KW-0597">Phosphoprotein</keyword>
<keyword id="KW-1185">Reference proteome</keyword>
<keyword id="KW-0804">Transcription</keyword>
<keyword id="KW-0805">Transcription regulation</keyword>
<keyword id="KW-0902">Two-component regulatory system</keyword>
<evidence type="ECO:0000255" key="1">
    <source>
        <dbReference type="PROSITE-ProRule" id="PRU00169"/>
    </source>
</evidence>
<evidence type="ECO:0000255" key="2">
    <source>
        <dbReference type="PROSITE-ProRule" id="PRU00411"/>
    </source>
</evidence>
<evidence type="ECO:0000269" key="3">
    <source>
    </source>
</evidence>
<evidence type="ECO:0000305" key="4"/>
<proteinExistence type="evidence at protein level"/>
<feature type="chain" id="PRO_0000349356" description="Oxygen regulatory protein NreC">
    <location>
        <begin position="1"/>
        <end position="217"/>
    </location>
</feature>
<feature type="domain" description="Response regulatory" evidence="1">
    <location>
        <begin position="2"/>
        <end position="119"/>
    </location>
</feature>
<feature type="domain" description="HTH luxR-type" evidence="2">
    <location>
        <begin position="148"/>
        <end position="213"/>
    </location>
</feature>
<feature type="DNA-binding region" description="H-T-H motif" evidence="2">
    <location>
        <begin position="172"/>
        <end position="191"/>
    </location>
</feature>
<feature type="modified residue" description="4-aspartylphosphate" evidence="1">
    <location>
        <position position="53"/>
    </location>
</feature>
<organism>
    <name type="scientific">Staphylococcus carnosus (strain TM300)</name>
    <dbReference type="NCBI Taxonomy" id="396513"/>
    <lineage>
        <taxon>Bacteria</taxon>
        <taxon>Bacillati</taxon>
        <taxon>Bacillota</taxon>
        <taxon>Bacilli</taxon>
        <taxon>Bacillales</taxon>
        <taxon>Staphylococcaceae</taxon>
        <taxon>Staphylococcus</taxon>
    </lineage>
</organism>
<dbReference type="EMBL" id="AF029224">
    <property type="protein sequence ID" value="AAP79640.1"/>
    <property type="molecule type" value="Genomic_DNA"/>
</dbReference>
<dbReference type="EMBL" id="AM295250">
    <property type="protein sequence ID" value="CAL28794.1"/>
    <property type="molecule type" value="Genomic_DNA"/>
</dbReference>
<dbReference type="EMBL" id="U40158">
    <property type="protein sequence ID" value="AAD10462.1"/>
    <property type="molecule type" value="Genomic_DNA"/>
</dbReference>
<dbReference type="RefSeq" id="WP_015901130.1">
    <property type="nucleotide sequence ID" value="NC_012121.1"/>
</dbReference>
<dbReference type="SMR" id="Q7WZY4"/>
<dbReference type="GeneID" id="93794343"/>
<dbReference type="KEGG" id="sca:SCA_1888"/>
<dbReference type="eggNOG" id="COG2197">
    <property type="taxonomic scope" value="Bacteria"/>
</dbReference>
<dbReference type="HOGENOM" id="CLU_000445_90_1_9"/>
<dbReference type="OrthoDB" id="9780153at2"/>
<dbReference type="BioCyc" id="SCAR396513:SCA_RS09580-MONOMER"/>
<dbReference type="Proteomes" id="UP000000444">
    <property type="component" value="Chromosome"/>
</dbReference>
<dbReference type="GO" id="GO:0005737">
    <property type="term" value="C:cytoplasm"/>
    <property type="evidence" value="ECO:0007669"/>
    <property type="project" value="UniProtKB-SubCell"/>
</dbReference>
<dbReference type="GO" id="GO:0003677">
    <property type="term" value="F:DNA binding"/>
    <property type="evidence" value="ECO:0007669"/>
    <property type="project" value="UniProtKB-KW"/>
</dbReference>
<dbReference type="GO" id="GO:0000160">
    <property type="term" value="P:phosphorelay signal transduction system"/>
    <property type="evidence" value="ECO:0007669"/>
    <property type="project" value="UniProtKB-KW"/>
</dbReference>
<dbReference type="GO" id="GO:0006355">
    <property type="term" value="P:regulation of DNA-templated transcription"/>
    <property type="evidence" value="ECO:0007669"/>
    <property type="project" value="InterPro"/>
</dbReference>
<dbReference type="CDD" id="cd06170">
    <property type="entry name" value="LuxR_C_like"/>
    <property type="match status" value="1"/>
</dbReference>
<dbReference type="CDD" id="cd17535">
    <property type="entry name" value="REC_NarL-like"/>
    <property type="match status" value="1"/>
</dbReference>
<dbReference type="Gene3D" id="3.40.50.2300">
    <property type="match status" value="1"/>
</dbReference>
<dbReference type="InterPro" id="IPR011006">
    <property type="entry name" value="CheY-like_superfamily"/>
</dbReference>
<dbReference type="InterPro" id="IPR016032">
    <property type="entry name" value="Sig_transdc_resp-reg_C-effctor"/>
</dbReference>
<dbReference type="InterPro" id="IPR001789">
    <property type="entry name" value="Sig_transdc_resp-reg_receiver"/>
</dbReference>
<dbReference type="InterPro" id="IPR000792">
    <property type="entry name" value="Tscrpt_reg_LuxR_C"/>
</dbReference>
<dbReference type="InterPro" id="IPR039420">
    <property type="entry name" value="WalR-like"/>
</dbReference>
<dbReference type="PANTHER" id="PTHR43214:SF37">
    <property type="entry name" value="TRANSCRIPTIONAL REGULATORY PROTEIN YDFI"/>
    <property type="match status" value="1"/>
</dbReference>
<dbReference type="PANTHER" id="PTHR43214">
    <property type="entry name" value="TWO-COMPONENT RESPONSE REGULATOR"/>
    <property type="match status" value="1"/>
</dbReference>
<dbReference type="Pfam" id="PF00196">
    <property type="entry name" value="GerE"/>
    <property type="match status" value="1"/>
</dbReference>
<dbReference type="Pfam" id="PF00072">
    <property type="entry name" value="Response_reg"/>
    <property type="match status" value="1"/>
</dbReference>
<dbReference type="PRINTS" id="PR00038">
    <property type="entry name" value="HTHLUXR"/>
</dbReference>
<dbReference type="SMART" id="SM00421">
    <property type="entry name" value="HTH_LUXR"/>
    <property type="match status" value="1"/>
</dbReference>
<dbReference type="SMART" id="SM00448">
    <property type="entry name" value="REC"/>
    <property type="match status" value="1"/>
</dbReference>
<dbReference type="SUPFAM" id="SSF46894">
    <property type="entry name" value="C-terminal effector domain of the bipartite response regulators"/>
    <property type="match status" value="1"/>
</dbReference>
<dbReference type="SUPFAM" id="SSF52172">
    <property type="entry name" value="CheY-like"/>
    <property type="match status" value="1"/>
</dbReference>
<dbReference type="PROSITE" id="PS00622">
    <property type="entry name" value="HTH_LUXR_1"/>
    <property type="match status" value="1"/>
</dbReference>
<dbReference type="PROSITE" id="PS50043">
    <property type="entry name" value="HTH_LUXR_2"/>
    <property type="match status" value="1"/>
</dbReference>
<dbReference type="PROSITE" id="PS50110">
    <property type="entry name" value="RESPONSE_REGULATORY"/>
    <property type="match status" value="1"/>
</dbReference>
<gene>
    <name type="primary">nreC</name>
    <name type="ordered locus">Sca_1888</name>
</gene>
<accession>Q7WZY4</accession>
<accession>B9DL89</accession>
<accession>Q9ZB65</accession>
<comment type="function">
    <text evidence="3">Member of the two-component regulatory system NreB/NreC involved in the control of dissimilatory nitrate/nitrite reduction in response to oxygen. Phosphorylated NreC binds to a GC-rich palindromic sequence at the promoters of the nitrate (narGHJI) and nitrite (nir) reductase operons, as well as the putative nitrate transporter gene narT, and activates their expression.</text>
</comment>
<comment type="subcellular location">
    <subcellularLocation>
        <location evidence="4">Cytoplasm</location>
    </subcellularLocation>
</comment>
<comment type="PTM">
    <text evidence="3">Phosphorylated by NreB.</text>
</comment>
<reference key="1">
    <citation type="journal article" date="2002" name="J. Bacteriol.">
        <title>The nitrate reductase and nitrite reductase operons and the narT gene of Staphylococcus carnosus are positively controlled by the novel two-component system NreBC.</title>
        <authorList>
            <person name="Fedtke I."/>
            <person name="Kamps A."/>
            <person name="Krismer B."/>
            <person name="Goetz F."/>
        </authorList>
    </citation>
    <scope>NUCLEOTIDE SEQUENCE [GENOMIC DNA]</scope>
    <scope>FUNCTION AS A TRANSCRIPTIONAL REGULATOR</scope>
    <scope>PHOSPHORYLATION</scope>
</reference>
<reference key="2">
    <citation type="journal article" date="2009" name="Appl. Environ. Microbiol.">
        <title>Genome analysis of the meat starter culture bacterium Staphylococcus carnosus TM300.</title>
        <authorList>
            <person name="Rosenstein R."/>
            <person name="Nerz C."/>
            <person name="Biswas L."/>
            <person name="Resch A."/>
            <person name="Raddatz G."/>
            <person name="Schuster S.C."/>
            <person name="Goetz F."/>
        </authorList>
    </citation>
    <scope>NUCLEOTIDE SEQUENCE [LARGE SCALE GENOMIC DNA]</scope>
    <source>
        <strain>TM300</strain>
    </source>
</reference>
<reference key="3">
    <citation type="submission" date="1995-11" db="EMBL/GenBank/DDBJ databases">
        <authorList>
            <person name="Fast B."/>
            <person name="Goetz F."/>
        </authorList>
    </citation>
    <scope>NUCLEOTIDE SEQUENCE [GENOMIC DNA] OF 33-217</scope>
</reference>
<name>NREC_STACT</name>